<name>LIP1_PHOLU</name>
<feature type="signal peptide" evidence="3">
    <location>
        <begin position="1"/>
        <end position="24"/>
    </location>
</feature>
<feature type="chain" id="PRO_0000017843" description="Lipase 1">
    <location>
        <begin position="25"/>
        <end position="645"/>
    </location>
</feature>
<feature type="domain" description="Autotransporter" evidence="2">
    <location>
        <begin position="383"/>
        <end position="645"/>
    </location>
</feature>
<feature type="active site" description="Nucleophile" evidence="1">
    <location>
        <position position="34"/>
    </location>
</feature>
<feature type="active site" evidence="1">
    <location>
        <position position="327"/>
    </location>
</feature>
<feature type="active site" evidence="1">
    <location>
        <position position="330"/>
    </location>
</feature>
<protein>
    <recommendedName>
        <fullName>Lipase 1</fullName>
        <ecNumber>3.1.1.3</ecNumber>
    </recommendedName>
    <alternativeName>
        <fullName>Triacylglycerol lipase</fullName>
    </alternativeName>
</protein>
<comment type="catalytic activity">
    <reaction>
        <text>a triacylglycerol + H2O = a diacylglycerol + a fatty acid + H(+)</text>
        <dbReference type="Rhea" id="RHEA:12044"/>
        <dbReference type="ChEBI" id="CHEBI:15377"/>
        <dbReference type="ChEBI" id="CHEBI:15378"/>
        <dbReference type="ChEBI" id="CHEBI:17855"/>
        <dbReference type="ChEBI" id="CHEBI:18035"/>
        <dbReference type="ChEBI" id="CHEBI:28868"/>
        <dbReference type="EC" id="3.1.1.3"/>
    </reaction>
</comment>
<comment type="subcellular location">
    <subcellularLocation>
        <location>Secreted</location>
    </subcellularLocation>
</comment>
<comment type="similarity">
    <text evidence="4">Belongs to the 'GDSL' lipolytic enzyme family.</text>
</comment>
<dbReference type="EC" id="3.1.1.3"/>
<dbReference type="EMBL" id="X66379">
    <property type="protein sequence ID" value="CAA47020.1"/>
    <property type="molecule type" value="Genomic_DNA"/>
</dbReference>
<dbReference type="PIR" id="A47081">
    <property type="entry name" value="A47081"/>
</dbReference>
<dbReference type="SMR" id="P40601"/>
<dbReference type="GO" id="GO:0005576">
    <property type="term" value="C:extracellular region"/>
    <property type="evidence" value="ECO:0007669"/>
    <property type="project" value="UniProtKB-SubCell"/>
</dbReference>
<dbReference type="GO" id="GO:0019867">
    <property type="term" value="C:outer membrane"/>
    <property type="evidence" value="ECO:0007669"/>
    <property type="project" value="InterPro"/>
</dbReference>
<dbReference type="GO" id="GO:0004806">
    <property type="term" value="F:triacylglycerol lipase activity"/>
    <property type="evidence" value="ECO:0007669"/>
    <property type="project" value="UniProtKB-EC"/>
</dbReference>
<dbReference type="GO" id="GO:0016042">
    <property type="term" value="P:lipid catabolic process"/>
    <property type="evidence" value="ECO:0007669"/>
    <property type="project" value="UniProtKB-KW"/>
</dbReference>
<dbReference type="CDD" id="cd01847">
    <property type="entry name" value="Triacylglycerol_lipase_like"/>
    <property type="match status" value="1"/>
</dbReference>
<dbReference type="Gene3D" id="2.40.128.130">
    <property type="entry name" value="Autotransporter beta-domain"/>
    <property type="match status" value="1"/>
</dbReference>
<dbReference type="Gene3D" id="3.40.50.1110">
    <property type="entry name" value="SGNH hydrolase"/>
    <property type="match status" value="1"/>
</dbReference>
<dbReference type="InterPro" id="IPR005546">
    <property type="entry name" value="Autotransporte_beta"/>
</dbReference>
<dbReference type="InterPro" id="IPR036709">
    <property type="entry name" value="Autotransporte_beta_dom_sf"/>
</dbReference>
<dbReference type="InterPro" id="IPR001087">
    <property type="entry name" value="GDSL"/>
</dbReference>
<dbReference type="InterPro" id="IPR017186">
    <property type="entry name" value="Lipase_autotranspt_EstA"/>
</dbReference>
<dbReference type="InterPro" id="IPR008265">
    <property type="entry name" value="Lipase_GDSL_AS"/>
</dbReference>
<dbReference type="InterPro" id="IPR006315">
    <property type="entry name" value="OM_autotransptr_brl_dom"/>
</dbReference>
<dbReference type="InterPro" id="IPR036514">
    <property type="entry name" value="SGNH_hydro_sf"/>
</dbReference>
<dbReference type="NCBIfam" id="TIGR01414">
    <property type="entry name" value="autotrans_barl"/>
    <property type="match status" value="1"/>
</dbReference>
<dbReference type="PANTHER" id="PTHR22835:SF659">
    <property type="entry name" value="GDSL LIPASE_ACYLHYDROLASE, PUTATIVE (AFU_ORTHOLOGUE AFUA_2G00510)-RELATED"/>
    <property type="match status" value="1"/>
</dbReference>
<dbReference type="PANTHER" id="PTHR22835">
    <property type="entry name" value="ZINC FINGER FYVE DOMAIN CONTAINING PROTEIN"/>
    <property type="match status" value="1"/>
</dbReference>
<dbReference type="Pfam" id="PF03797">
    <property type="entry name" value="Autotransporter"/>
    <property type="match status" value="1"/>
</dbReference>
<dbReference type="Pfam" id="PF00657">
    <property type="entry name" value="Lipase_GDSL"/>
    <property type="match status" value="1"/>
</dbReference>
<dbReference type="PIRSF" id="PIRSF037375">
    <property type="entry name" value="Autotrns_EstA"/>
    <property type="match status" value="1"/>
</dbReference>
<dbReference type="SMART" id="SM00869">
    <property type="entry name" value="Autotransporter"/>
    <property type="match status" value="1"/>
</dbReference>
<dbReference type="SUPFAM" id="SSF103515">
    <property type="entry name" value="Autotransporter"/>
    <property type="match status" value="1"/>
</dbReference>
<dbReference type="SUPFAM" id="SSF52266">
    <property type="entry name" value="SGNH hydrolase"/>
    <property type="match status" value="1"/>
</dbReference>
<dbReference type="PROSITE" id="PS51208">
    <property type="entry name" value="AUTOTRANSPORTER"/>
    <property type="match status" value="1"/>
</dbReference>
<dbReference type="PROSITE" id="PS01098">
    <property type="entry name" value="LIPASE_GDSL_SER"/>
    <property type="match status" value="1"/>
</dbReference>
<accession>P40601</accession>
<sequence length="645" mass="70717">MKRSFIFAPGMLALSISAISNAHAYNNLYVFGDSLSDGGNNGRYTVDGINGTESKLYNDFIAQQLGIELVNSKKGGTNYAAGGATAVADLNNKHNTQDQVMGYLASHSNRADHNGMYVHWIGGNDVDAALRNPADAQKIITESAMAASSQVHALLNAGAGLVIVPTVPDVGMTPKIMEFVLSKGGATSKDLAKIHAVVNGYPTIDKDTRLQVIHGVFKQIGSDVSGGDAKKAEETTKQLIDGYNELSSNASKLVDNYNQLEDMALSQENGNIVRVDVNALLHEVIANPLRYGFLNTIGYACAQGVNAGSCRSKDTGFDASKPFLFADDFHPTPEAHHIVSQYTVSVLNAPYRVMLLTNANNVPVKGALASLDGRLQQLRNVDNEQGKLGVFGGYSGNHSHTLTLGSDYQIMDNILLGGMISRYQDNSSPADNFHYDGRGYVFTAYGLWRYYDKGWISGDLHYLDMKYEDITRGIVLNDWLRKENASTSGHQWGGRITAGWDIPLTSAVTTSPIIQYAWDKSYVKGYRESGNNSTAMHFGEQRYDSQVGTLGWRLDTNFGYFNPYAEVRFNHQFGDKRYQIRSAINSTQTSFVSESQKQDTHWREYTIGMNAVITKDWGAFASISRNDGDVQNHTYSFSLGVNASF</sequence>
<keyword id="KW-0903">Direct protein sequencing</keyword>
<keyword id="KW-0378">Hydrolase</keyword>
<keyword id="KW-0442">Lipid degradation</keyword>
<keyword id="KW-0443">Lipid metabolism</keyword>
<keyword id="KW-0964">Secreted</keyword>
<keyword id="KW-0732">Signal</keyword>
<proteinExistence type="evidence at protein level"/>
<reference key="1">
    <citation type="journal article" date="1993" name="J. Bacteriol.">
        <title>Phase variation in Xenorhabdus luminescens: cloning and sequencing of the lipase gene and analysis of its expression in primary and secondary phases of the bacterium.</title>
        <authorList>
            <person name="Wang H."/>
            <person name="Dowds B.C.A."/>
        </authorList>
    </citation>
    <scope>NUCLEOTIDE SEQUENCE [GENOMIC DNA]</scope>
    <scope>PROTEIN SEQUENCE OF 25-41</scope>
    <source>
        <strain>K122</strain>
    </source>
</reference>
<organism>
    <name type="scientific">Photorhabdus luminescens</name>
    <name type="common">Xenorhabdus luminescens</name>
    <dbReference type="NCBI Taxonomy" id="29488"/>
    <lineage>
        <taxon>Bacteria</taxon>
        <taxon>Pseudomonadati</taxon>
        <taxon>Pseudomonadota</taxon>
        <taxon>Gammaproteobacteria</taxon>
        <taxon>Enterobacterales</taxon>
        <taxon>Morganellaceae</taxon>
        <taxon>Photorhabdus</taxon>
    </lineage>
</organism>
<gene>
    <name type="primary">lip-1</name>
</gene>
<evidence type="ECO:0000250" key="1"/>
<evidence type="ECO:0000255" key="2">
    <source>
        <dbReference type="PROSITE-ProRule" id="PRU00556"/>
    </source>
</evidence>
<evidence type="ECO:0000269" key="3">
    <source>
    </source>
</evidence>
<evidence type="ECO:0000305" key="4"/>